<proteinExistence type="inferred from homology"/>
<sequence>MSIKIAIDAMGGDHGIKVTVPASLEALSKFSDISIVLVGNQPLIEAELANHKYDKNRLSVEHAEQIVEMDDLPSKALRNKRKSSMRIALNLVKDDVAQACVSAGNTGALMAVSKFVLKTLPGIDRPAICTQMPTMKGHVHVLDLGANVGADGQSLAQFAVMGSVLAQAVDSNSRPRVGLLNIGEEEIKGHQRIKDANEILKSSDAINYVGYVEGDEIFKGDVDVVSCDGFDGNVALKASEGVAKMISFYLRAAFNKNLLTKLAGLVVYPVLKAFKAKVDPRRYNGASFLGLRKIVIKSHGGADVFSFYHAIAEARLEVNKNVPELIATEVKAILETH</sequence>
<reference key="1">
    <citation type="journal article" date="2006" name="PLoS Biol.">
        <title>The genome of deep-sea vent chemolithoautotroph Thiomicrospira crunogena XCL-2.</title>
        <authorList>
            <person name="Scott K.M."/>
            <person name="Sievert S.M."/>
            <person name="Abril F.N."/>
            <person name="Ball L.A."/>
            <person name="Barrett C.J."/>
            <person name="Blake R.A."/>
            <person name="Boller A.J."/>
            <person name="Chain P.S.G."/>
            <person name="Clark J.A."/>
            <person name="Davis C.R."/>
            <person name="Detter C."/>
            <person name="Do K.F."/>
            <person name="Dobrinski K.P."/>
            <person name="Faza B.I."/>
            <person name="Fitzpatrick K.A."/>
            <person name="Freyermuth S.K."/>
            <person name="Harmer T.L."/>
            <person name="Hauser L.J."/>
            <person name="Huegler M."/>
            <person name="Kerfeld C.A."/>
            <person name="Klotz M.G."/>
            <person name="Kong W.W."/>
            <person name="Land M."/>
            <person name="Lapidus A."/>
            <person name="Larimer F.W."/>
            <person name="Longo D.L."/>
            <person name="Lucas S."/>
            <person name="Malfatti S.A."/>
            <person name="Massey S.E."/>
            <person name="Martin D.D."/>
            <person name="McCuddin Z."/>
            <person name="Meyer F."/>
            <person name="Moore J.L."/>
            <person name="Ocampo L.H. Jr."/>
            <person name="Paul J.H."/>
            <person name="Paulsen I.T."/>
            <person name="Reep D.K."/>
            <person name="Ren Q."/>
            <person name="Ross R.L."/>
            <person name="Sato P.Y."/>
            <person name="Thomas P."/>
            <person name="Tinkham L.E."/>
            <person name="Zeruth G.T."/>
        </authorList>
    </citation>
    <scope>NUCLEOTIDE SEQUENCE [LARGE SCALE GENOMIC DNA]</scope>
    <source>
        <strain>DSM 25203 / XCL-2</strain>
    </source>
</reference>
<comment type="function">
    <text evidence="1">Catalyzes the reversible formation of acyl-phosphate (acyl-PO(4)) from acyl-[acyl-carrier-protein] (acyl-ACP). This enzyme utilizes acyl-ACP as fatty acyl donor, but not acyl-CoA.</text>
</comment>
<comment type="catalytic activity">
    <reaction evidence="1">
        <text>a fatty acyl-[ACP] + phosphate = an acyl phosphate + holo-[ACP]</text>
        <dbReference type="Rhea" id="RHEA:42292"/>
        <dbReference type="Rhea" id="RHEA-COMP:9685"/>
        <dbReference type="Rhea" id="RHEA-COMP:14125"/>
        <dbReference type="ChEBI" id="CHEBI:43474"/>
        <dbReference type="ChEBI" id="CHEBI:59918"/>
        <dbReference type="ChEBI" id="CHEBI:64479"/>
        <dbReference type="ChEBI" id="CHEBI:138651"/>
        <dbReference type="EC" id="2.3.1.274"/>
    </reaction>
</comment>
<comment type="pathway">
    <text evidence="1">Lipid metabolism; phospholipid metabolism.</text>
</comment>
<comment type="subunit">
    <text evidence="1">Homodimer. Probably interacts with PlsY.</text>
</comment>
<comment type="subcellular location">
    <subcellularLocation>
        <location evidence="1">Cytoplasm</location>
    </subcellularLocation>
    <text evidence="1">Associated with the membrane possibly through PlsY.</text>
</comment>
<comment type="similarity">
    <text evidence="1">Belongs to the PlsX family.</text>
</comment>
<accession>Q31HR8</accession>
<keyword id="KW-0963">Cytoplasm</keyword>
<keyword id="KW-0444">Lipid biosynthesis</keyword>
<keyword id="KW-0443">Lipid metabolism</keyword>
<keyword id="KW-0594">Phospholipid biosynthesis</keyword>
<keyword id="KW-1208">Phospholipid metabolism</keyword>
<keyword id="KW-0808">Transferase</keyword>
<protein>
    <recommendedName>
        <fullName evidence="1">Phosphate acyltransferase</fullName>
        <ecNumber evidence="1">2.3.1.274</ecNumber>
    </recommendedName>
    <alternativeName>
        <fullName evidence="1">Acyl-ACP phosphotransacylase</fullName>
    </alternativeName>
    <alternativeName>
        <fullName evidence="1">Acyl-[acyl-carrier-protein]--phosphate acyltransferase</fullName>
    </alternativeName>
    <alternativeName>
        <fullName evidence="1">Phosphate-acyl-ACP acyltransferase</fullName>
    </alternativeName>
</protein>
<feature type="chain" id="PRO_1000001855" description="Phosphate acyltransferase">
    <location>
        <begin position="1"/>
        <end position="337"/>
    </location>
</feature>
<name>PLSX_HYDCU</name>
<gene>
    <name evidence="1" type="primary">plsX</name>
    <name type="ordered locus">Tcr_0709</name>
</gene>
<dbReference type="EC" id="2.3.1.274" evidence="1"/>
<dbReference type="EMBL" id="CP000109">
    <property type="protein sequence ID" value="ABB41305.1"/>
    <property type="molecule type" value="Genomic_DNA"/>
</dbReference>
<dbReference type="SMR" id="Q31HR8"/>
<dbReference type="STRING" id="317025.Tcr_0709"/>
<dbReference type="KEGG" id="tcx:Tcr_0709"/>
<dbReference type="eggNOG" id="COG0416">
    <property type="taxonomic scope" value="Bacteria"/>
</dbReference>
<dbReference type="HOGENOM" id="CLU_039379_1_0_6"/>
<dbReference type="OrthoDB" id="9806408at2"/>
<dbReference type="UniPathway" id="UPA00085"/>
<dbReference type="GO" id="GO:0005737">
    <property type="term" value="C:cytoplasm"/>
    <property type="evidence" value="ECO:0007669"/>
    <property type="project" value="UniProtKB-SubCell"/>
</dbReference>
<dbReference type="GO" id="GO:0043811">
    <property type="term" value="F:phosphate:acyl-[acyl carrier protein] acyltransferase activity"/>
    <property type="evidence" value="ECO:0007669"/>
    <property type="project" value="UniProtKB-UniRule"/>
</dbReference>
<dbReference type="GO" id="GO:0006633">
    <property type="term" value="P:fatty acid biosynthetic process"/>
    <property type="evidence" value="ECO:0007669"/>
    <property type="project" value="UniProtKB-UniRule"/>
</dbReference>
<dbReference type="GO" id="GO:0008654">
    <property type="term" value="P:phospholipid biosynthetic process"/>
    <property type="evidence" value="ECO:0007669"/>
    <property type="project" value="UniProtKB-KW"/>
</dbReference>
<dbReference type="Gene3D" id="3.40.718.10">
    <property type="entry name" value="Isopropylmalate Dehydrogenase"/>
    <property type="match status" value="1"/>
</dbReference>
<dbReference type="HAMAP" id="MF_00019">
    <property type="entry name" value="PlsX"/>
    <property type="match status" value="1"/>
</dbReference>
<dbReference type="InterPro" id="IPR003664">
    <property type="entry name" value="FA_synthesis"/>
</dbReference>
<dbReference type="InterPro" id="IPR012281">
    <property type="entry name" value="Phospholipid_synth_PlsX-like"/>
</dbReference>
<dbReference type="NCBIfam" id="TIGR00182">
    <property type="entry name" value="plsX"/>
    <property type="match status" value="1"/>
</dbReference>
<dbReference type="PANTHER" id="PTHR30100">
    <property type="entry name" value="FATTY ACID/PHOSPHOLIPID SYNTHESIS PROTEIN PLSX"/>
    <property type="match status" value="1"/>
</dbReference>
<dbReference type="PANTHER" id="PTHR30100:SF1">
    <property type="entry name" value="PHOSPHATE ACYLTRANSFERASE"/>
    <property type="match status" value="1"/>
</dbReference>
<dbReference type="Pfam" id="PF02504">
    <property type="entry name" value="FA_synthesis"/>
    <property type="match status" value="1"/>
</dbReference>
<dbReference type="PIRSF" id="PIRSF002465">
    <property type="entry name" value="Phsphlp_syn_PlsX"/>
    <property type="match status" value="1"/>
</dbReference>
<dbReference type="SUPFAM" id="SSF53659">
    <property type="entry name" value="Isocitrate/Isopropylmalate dehydrogenase-like"/>
    <property type="match status" value="1"/>
</dbReference>
<organism>
    <name type="scientific">Hydrogenovibrio crunogenus (strain DSM 25203 / XCL-2)</name>
    <name type="common">Thiomicrospira crunogena</name>
    <dbReference type="NCBI Taxonomy" id="317025"/>
    <lineage>
        <taxon>Bacteria</taxon>
        <taxon>Pseudomonadati</taxon>
        <taxon>Pseudomonadota</taxon>
        <taxon>Gammaproteobacteria</taxon>
        <taxon>Thiotrichales</taxon>
        <taxon>Piscirickettsiaceae</taxon>
        <taxon>Hydrogenovibrio</taxon>
    </lineage>
</organism>
<evidence type="ECO:0000255" key="1">
    <source>
        <dbReference type="HAMAP-Rule" id="MF_00019"/>
    </source>
</evidence>